<name>RLF36_ARATH</name>
<reference key="1">
    <citation type="journal article" date="1999" name="Nature">
        <title>Sequence and analysis of chromosome 2 of the plant Arabidopsis thaliana.</title>
        <authorList>
            <person name="Lin X."/>
            <person name="Kaul S."/>
            <person name="Rounsley S.D."/>
            <person name="Shea T.P."/>
            <person name="Benito M.-I."/>
            <person name="Town C.D."/>
            <person name="Fujii C.Y."/>
            <person name="Mason T.M."/>
            <person name="Bowman C.L."/>
            <person name="Barnstead M.E."/>
            <person name="Feldblyum T.V."/>
            <person name="Buell C.R."/>
            <person name="Ketchum K.A."/>
            <person name="Lee J.J."/>
            <person name="Ronning C.M."/>
            <person name="Koo H.L."/>
            <person name="Moffat K.S."/>
            <person name="Cronin L.A."/>
            <person name="Shen M."/>
            <person name="Pai G."/>
            <person name="Van Aken S."/>
            <person name="Umayam L."/>
            <person name="Tallon L.J."/>
            <person name="Gill J.E."/>
            <person name="Adams M.D."/>
            <person name="Carrera A.J."/>
            <person name="Creasy T.H."/>
            <person name="Goodman H.M."/>
            <person name="Somerville C.R."/>
            <person name="Copenhaver G.P."/>
            <person name="Preuss D."/>
            <person name="Nierman W.C."/>
            <person name="White O."/>
            <person name="Eisen J.A."/>
            <person name="Salzberg S.L."/>
            <person name="Fraser C.M."/>
            <person name="Venter J.C."/>
        </authorList>
    </citation>
    <scope>NUCLEOTIDE SEQUENCE [LARGE SCALE GENOMIC DNA]</scope>
    <source>
        <strain>cv. Columbia</strain>
    </source>
</reference>
<reference key="2">
    <citation type="journal article" date="2017" name="Plant J.">
        <title>Araport11: a complete reannotation of the Arabidopsis thaliana reference genome.</title>
        <authorList>
            <person name="Cheng C.Y."/>
            <person name="Krishnakumar V."/>
            <person name="Chan A.P."/>
            <person name="Thibaud-Nissen F."/>
            <person name="Schobel S."/>
            <person name="Town C.D."/>
        </authorList>
    </citation>
    <scope>GENOME REANNOTATION</scope>
    <source>
        <strain>cv. Columbia</strain>
    </source>
</reference>
<reference key="3">
    <citation type="journal article" date="2005" name="Plant Physiol.">
        <title>Analysis of the cDNAs of hypothetical genes on Arabidopsis chromosome 2 reveals numerous transcript variants.</title>
        <authorList>
            <person name="Xiao Y.-L."/>
            <person name="Smith S.R."/>
            <person name="Ishmael N."/>
            <person name="Redman J.C."/>
            <person name="Kumar N."/>
            <person name="Monaghan E.L."/>
            <person name="Ayele M."/>
            <person name="Haas B.J."/>
            <person name="Wu H.C."/>
            <person name="Town C.D."/>
        </authorList>
    </citation>
    <scope>NUCLEOTIDE SEQUENCE [LARGE SCALE MRNA]</scope>
    <source>
        <strain>cv. Columbia</strain>
    </source>
</reference>
<proteinExistence type="inferred from homology"/>
<comment type="function">
    <text evidence="1">Cell signaling peptide that may regulate plant stress, growth, and development. Mediates a rapid alkalinization of extracellular space by mediating a transient increase in the cytoplasmic Ca(2+) concentration leading to a calcium-dependent signaling events through a cell surface receptor and a concomitant activation of some intracellular mitogen-activated protein kinases (By similarity).</text>
</comment>
<comment type="subcellular location">
    <subcellularLocation>
        <location evidence="1">Secreted</location>
    </subcellularLocation>
</comment>
<comment type="similarity">
    <text evidence="3">Belongs to the plant rapid alkalinization factor (RALF) family.</text>
</comment>
<organism>
    <name type="scientific">Arabidopsis thaliana</name>
    <name type="common">Mouse-ear cress</name>
    <dbReference type="NCBI Taxonomy" id="3702"/>
    <lineage>
        <taxon>Eukaryota</taxon>
        <taxon>Viridiplantae</taxon>
        <taxon>Streptophyta</taxon>
        <taxon>Embryophyta</taxon>
        <taxon>Tracheophyta</taxon>
        <taxon>Spermatophyta</taxon>
        <taxon>Magnoliopsida</taxon>
        <taxon>eudicotyledons</taxon>
        <taxon>Gunneridae</taxon>
        <taxon>Pentapetalae</taxon>
        <taxon>rosids</taxon>
        <taxon>malvids</taxon>
        <taxon>Brassicales</taxon>
        <taxon>Brassicaceae</taxon>
        <taxon>Camelineae</taxon>
        <taxon>Arabidopsis</taxon>
    </lineage>
</organism>
<gene>
    <name type="ordered locus">At2g32885</name>
    <name type="ORF">T21L14</name>
</gene>
<keyword id="KW-1015">Disulfide bond</keyword>
<keyword id="KW-0372">Hormone</keyword>
<keyword id="KW-1185">Reference proteome</keyword>
<keyword id="KW-0964">Secreted</keyword>
<keyword id="KW-0732">Signal</keyword>
<feature type="signal peptide" evidence="2">
    <location>
        <begin position="1"/>
        <end position="27"/>
    </location>
</feature>
<feature type="chain" id="PRO_0000420338" description="Protein RALF-like 36">
    <location>
        <begin position="28"/>
        <end position="72"/>
    </location>
</feature>
<feature type="disulfide bond" evidence="1">
    <location>
        <begin position="43"/>
        <end position="51"/>
    </location>
</feature>
<feature type="disulfide bond" evidence="1">
    <location>
        <begin position="63"/>
        <end position="69"/>
    </location>
</feature>
<accession>A8MR00</accession>
<protein>
    <recommendedName>
        <fullName>Protein RALF-like 36</fullName>
    </recommendedName>
</protein>
<dbReference type="EMBL" id="AC003033">
    <property type="status" value="NOT_ANNOTATED_CDS"/>
    <property type="molecule type" value="Genomic_DNA"/>
</dbReference>
<dbReference type="EMBL" id="CP002685">
    <property type="protein sequence ID" value="AEC08757.1"/>
    <property type="molecule type" value="Genomic_DNA"/>
</dbReference>
<dbReference type="EMBL" id="DQ069843">
    <property type="status" value="NOT_ANNOTATED_CDS"/>
    <property type="molecule type" value="mRNA"/>
</dbReference>
<dbReference type="RefSeq" id="NP_001077998.1">
    <property type="nucleotide sequence ID" value="NM_001084529.1"/>
</dbReference>
<dbReference type="STRING" id="3702.A8MR00"/>
<dbReference type="PaxDb" id="3702-AT2G32885.1"/>
<dbReference type="EnsemblPlants" id="AT2G32885.1">
    <property type="protein sequence ID" value="AT2G32885.1"/>
    <property type="gene ID" value="AT2G32885"/>
</dbReference>
<dbReference type="GeneID" id="5007924"/>
<dbReference type="Gramene" id="AT2G32885.1">
    <property type="protein sequence ID" value="AT2G32885.1"/>
    <property type="gene ID" value="AT2G32885"/>
</dbReference>
<dbReference type="KEGG" id="ath:AT2G32885"/>
<dbReference type="Araport" id="AT2G32885"/>
<dbReference type="TAIR" id="AT2G32885"/>
<dbReference type="eggNOG" id="ENOG502T1XS">
    <property type="taxonomic scope" value="Eukaryota"/>
</dbReference>
<dbReference type="HOGENOM" id="CLU_2815974_0_0_1"/>
<dbReference type="InParanoid" id="A8MR00"/>
<dbReference type="OMA" id="HKSCASG"/>
<dbReference type="OrthoDB" id="1041814at2759"/>
<dbReference type="PhylomeDB" id="A8MR00"/>
<dbReference type="PRO" id="PR:A8MR00"/>
<dbReference type="Proteomes" id="UP000006548">
    <property type="component" value="Chromosome 2"/>
</dbReference>
<dbReference type="ExpressionAtlas" id="A8MR00">
    <property type="expression patterns" value="baseline and differential"/>
</dbReference>
<dbReference type="GO" id="GO:0005576">
    <property type="term" value="C:extracellular region"/>
    <property type="evidence" value="ECO:0007669"/>
    <property type="project" value="UniProtKB-SubCell"/>
</dbReference>
<dbReference type="GO" id="GO:0005179">
    <property type="term" value="F:hormone activity"/>
    <property type="evidence" value="ECO:0000250"/>
    <property type="project" value="UniProtKB"/>
</dbReference>
<dbReference type="GO" id="GO:0019722">
    <property type="term" value="P:calcium-mediated signaling"/>
    <property type="evidence" value="ECO:0000250"/>
    <property type="project" value="UniProtKB"/>
</dbReference>
<dbReference type="GO" id="GO:0040008">
    <property type="term" value="P:regulation of growth"/>
    <property type="evidence" value="ECO:0007669"/>
    <property type="project" value="UniProtKB-ARBA"/>
</dbReference>
<dbReference type="InterPro" id="IPR008801">
    <property type="entry name" value="RALF"/>
</dbReference>
<dbReference type="PANTHER" id="PTHR34270">
    <property type="entry name" value="PROTEIN RALF-LIKE 15-RELATED"/>
    <property type="match status" value="1"/>
</dbReference>
<dbReference type="PANTHER" id="PTHR34270:SF3">
    <property type="entry name" value="PROTEIN RALF-LIKE 16-RELATED"/>
    <property type="match status" value="1"/>
</dbReference>
<dbReference type="Pfam" id="PF05498">
    <property type="entry name" value="RALF"/>
    <property type="match status" value="1"/>
</dbReference>
<sequence length="72" mass="7414">MGISKKTVVQSFALIIIISIVMSTTEANSIGAPAMREDLPKGCAPGSSAGCKMQPANPYKPGCEASQRCRGG</sequence>
<evidence type="ECO:0000250" key="1"/>
<evidence type="ECO:0000255" key="2"/>
<evidence type="ECO:0000305" key="3"/>